<proteinExistence type="inferred from homology"/>
<name>Y2030_CLOP1</name>
<comment type="similarity">
    <text evidence="1">Belongs to the UPF0473 family.</text>
</comment>
<feature type="chain" id="PRO_0000304826" description="UPF0473 protein CPF_2030">
    <location>
        <begin position="1"/>
        <end position="84"/>
    </location>
</feature>
<accession>Q0TPH7</accession>
<sequence>MNNDLQPIVLVDEEGIETTFNVVTKLDIEEKEYFLLSPEGEEDVVIAMQVVQDEDGEETLAPVENDFEIEMIEEAYATLFAEEE</sequence>
<evidence type="ECO:0000255" key="1">
    <source>
        <dbReference type="HAMAP-Rule" id="MF_01448"/>
    </source>
</evidence>
<reference key="1">
    <citation type="journal article" date="2006" name="Genome Res.">
        <title>Skewed genomic variability in strains of the toxigenic bacterial pathogen, Clostridium perfringens.</title>
        <authorList>
            <person name="Myers G.S.A."/>
            <person name="Rasko D.A."/>
            <person name="Cheung J.K."/>
            <person name="Ravel J."/>
            <person name="Seshadri R."/>
            <person name="DeBoy R.T."/>
            <person name="Ren Q."/>
            <person name="Varga J."/>
            <person name="Awad M.M."/>
            <person name="Brinkac L.M."/>
            <person name="Daugherty S.C."/>
            <person name="Haft D.H."/>
            <person name="Dodson R.J."/>
            <person name="Madupu R."/>
            <person name="Nelson W.C."/>
            <person name="Rosovitz M.J."/>
            <person name="Sullivan S.A."/>
            <person name="Khouri H."/>
            <person name="Dimitrov G.I."/>
            <person name="Watkins K.L."/>
            <person name="Mulligan S."/>
            <person name="Benton J."/>
            <person name="Radune D."/>
            <person name="Fisher D.J."/>
            <person name="Atkins H.S."/>
            <person name="Hiscox T."/>
            <person name="Jost B.H."/>
            <person name="Billington S.J."/>
            <person name="Songer J.G."/>
            <person name="McClane B.A."/>
            <person name="Titball R.W."/>
            <person name="Rood J.I."/>
            <person name="Melville S.B."/>
            <person name="Paulsen I.T."/>
        </authorList>
    </citation>
    <scope>NUCLEOTIDE SEQUENCE [LARGE SCALE GENOMIC DNA]</scope>
    <source>
        <strain>ATCC 13124 / DSM 756 / JCM 1290 / NCIMB 6125 / NCTC 8237 / S 107 / Type A</strain>
    </source>
</reference>
<protein>
    <recommendedName>
        <fullName evidence="1">UPF0473 protein CPF_2030</fullName>
    </recommendedName>
</protein>
<dbReference type="EMBL" id="CP000246">
    <property type="protein sequence ID" value="ABG84967.1"/>
    <property type="molecule type" value="Genomic_DNA"/>
</dbReference>
<dbReference type="RefSeq" id="WP_003459598.1">
    <property type="nucleotide sequence ID" value="NC_008261.1"/>
</dbReference>
<dbReference type="STRING" id="195103.CPF_2030"/>
<dbReference type="PaxDb" id="195103-CPF_2030"/>
<dbReference type="KEGG" id="cpf:CPF_2030"/>
<dbReference type="eggNOG" id="COG3906">
    <property type="taxonomic scope" value="Bacteria"/>
</dbReference>
<dbReference type="HOGENOM" id="CLU_146610_8_0_9"/>
<dbReference type="Proteomes" id="UP000001823">
    <property type="component" value="Chromosome"/>
</dbReference>
<dbReference type="HAMAP" id="MF_01448">
    <property type="entry name" value="UPF0473"/>
    <property type="match status" value="1"/>
</dbReference>
<dbReference type="InterPro" id="IPR009711">
    <property type="entry name" value="UPF0473"/>
</dbReference>
<dbReference type="NCBIfam" id="NF010220">
    <property type="entry name" value="PRK13678.2-3"/>
    <property type="match status" value="1"/>
</dbReference>
<dbReference type="PANTHER" id="PTHR40066">
    <property type="entry name" value="UPF0473 PROTEIN CBO2561/CLC_2432"/>
    <property type="match status" value="1"/>
</dbReference>
<dbReference type="PANTHER" id="PTHR40066:SF1">
    <property type="entry name" value="UPF0473 PROTEIN CBO2561_CLC_2432"/>
    <property type="match status" value="1"/>
</dbReference>
<dbReference type="Pfam" id="PF06949">
    <property type="entry name" value="DUF1292"/>
    <property type="match status" value="1"/>
</dbReference>
<organism>
    <name type="scientific">Clostridium perfringens (strain ATCC 13124 / DSM 756 / JCM 1290 / NCIMB 6125 / NCTC 8237 / Type A)</name>
    <dbReference type="NCBI Taxonomy" id="195103"/>
    <lineage>
        <taxon>Bacteria</taxon>
        <taxon>Bacillati</taxon>
        <taxon>Bacillota</taxon>
        <taxon>Clostridia</taxon>
        <taxon>Eubacteriales</taxon>
        <taxon>Clostridiaceae</taxon>
        <taxon>Clostridium</taxon>
    </lineage>
</organism>
<gene>
    <name type="ordered locus">CPF_2030</name>
</gene>